<accession>C5CQL2</accession>
<gene>
    <name evidence="1" type="primary">mscL</name>
    <name type="ordered locus">Vapar_1187</name>
</gene>
<evidence type="ECO:0000255" key="1">
    <source>
        <dbReference type="HAMAP-Rule" id="MF_00115"/>
    </source>
</evidence>
<reference key="1">
    <citation type="journal article" date="2011" name="J. Bacteriol.">
        <title>Complete genome sequence of the metabolically versatile plant growth-promoting endophyte, Variovorax paradoxus S110.</title>
        <authorList>
            <person name="Han J.I."/>
            <person name="Choi H.K."/>
            <person name="Lee S.W."/>
            <person name="Orwin P.M."/>
            <person name="Kim J."/>
            <person name="Laroe S.L."/>
            <person name="Kim T.G."/>
            <person name="O'Neil J."/>
            <person name="Leadbetter J.R."/>
            <person name="Lee S.Y."/>
            <person name="Hur C.G."/>
            <person name="Spain J.C."/>
            <person name="Ovchinnikova G."/>
            <person name="Goodwin L."/>
            <person name="Han C."/>
        </authorList>
    </citation>
    <scope>NUCLEOTIDE SEQUENCE [LARGE SCALE GENOMIC DNA]</scope>
    <source>
        <strain>S110</strain>
    </source>
</reference>
<keyword id="KW-0997">Cell inner membrane</keyword>
<keyword id="KW-1003">Cell membrane</keyword>
<keyword id="KW-0407">Ion channel</keyword>
<keyword id="KW-0406">Ion transport</keyword>
<keyword id="KW-0472">Membrane</keyword>
<keyword id="KW-0812">Transmembrane</keyword>
<keyword id="KW-1133">Transmembrane helix</keyword>
<keyword id="KW-0813">Transport</keyword>
<comment type="function">
    <text evidence="1">Channel that opens in response to stretch forces in the membrane lipid bilayer. May participate in the regulation of osmotic pressure changes within the cell.</text>
</comment>
<comment type="subunit">
    <text evidence="1">Homopentamer.</text>
</comment>
<comment type="subcellular location">
    <subcellularLocation>
        <location evidence="1">Cell inner membrane</location>
        <topology evidence="1">Multi-pass membrane protein</topology>
    </subcellularLocation>
</comment>
<comment type="similarity">
    <text evidence="1">Belongs to the MscL family.</text>
</comment>
<proteinExistence type="inferred from homology"/>
<organism>
    <name type="scientific">Variovorax paradoxus (strain S110)</name>
    <dbReference type="NCBI Taxonomy" id="543728"/>
    <lineage>
        <taxon>Bacteria</taxon>
        <taxon>Pseudomonadati</taxon>
        <taxon>Pseudomonadota</taxon>
        <taxon>Betaproteobacteria</taxon>
        <taxon>Burkholderiales</taxon>
        <taxon>Comamonadaceae</taxon>
        <taxon>Variovorax</taxon>
    </lineage>
</organism>
<name>MSCL_VARPS</name>
<feature type="chain" id="PRO_1000202980" description="Large-conductance mechanosensitive channel">
    <location>
        <begin position="1"/>
        <end position="143"/>
    </location>
</feature>
<feature type="transmembrane region" description="Helical" evidence="1">
    <location>
        <begin position="21"/>
        <end position="41"/>
    </location>
</feature>
<feature type="transmembrane region" description="Helical" evidence="1">
    <location>
        <begin position="44"/>
        <end position="64"/>
    </location>
</feature>
<feature type="transmembrane region" description="Helical" evidence="1">
    <location>
        <begin position="86"/>
        <end position="106"/>
    </location>
</feature>
<protein>
    <recommendedName>
        <fullName evidence="1">Large-conductance mechanosensitive channel</fullName>
    </recommendedName>
</protein>
<dbReference type="EMBL" id="CP001635">
    <property type="protein sequence ID" value="ACS17838.1"/>
    <property type="molecule type" value="Genomic_DNA"/>
</dbReference>
<dbReference type="SMR" id="C5CQL2"/>
<dbReference type="STRING" id="543728.Vapar_1187"/>
<dbReference type="KEGG" id="vap:Vapar_1187"/>
<dbReference type="eggNOG" id="COG1970">
    <property type="taxonomic scope" value="Bacteria"/>
</dbReference>
<dbReference type="HOGENOM" id="CLU_095787_0_1_4"/>
<dbReference type="OrthoDB" id="9810350at2"/>
<dbReference type="GO" id="GO:0005886">
    <property type="term" value="C:plasma membrane"/>
    <property type="evidence" value="ECO:0007669"/>
    <property type="project" value="UniProtKB-SubCell"/>
</dbReference>
<dbReference type="GO" id="GO:0008381">
    <property type="term" value="F:mechanosensitive monoatomic ion channel activity"/>
    <property type="evidence" value="ECO:0007669"/>
    <property type="project" value="UniProtKB-UniRule"/>
</dbReference>
<dbReference type="Gene3D" id="1.10.1200.120">
    <property type="entry name" value="Large-conductance mechanosensitive channel, MscL, domain 1"/>
    <property type="match status" value="1"/>
</dbReference>
<dbReference type="HAMAP" id="MF_00115">
    <property type="entry name" value="MscL"/>
    <property type="match status" value="1"/>
</dbReference>
<dbReference type="InterPro" id="IPR019823">
    <property type="entry name" value="Mechanosensitive_channel_CS"/>
</dbReference>
<dbReference type="InterPro" id="IPR001185">
    <property type="entry name" value="MS_channel"/>
</dbReference>
<dbReference type="InterPro" id="IPR037673">
    <property type="entry name" value="MSC/AndL"/>
</dbReference>
<dbReference type="InterPro" id="IPR036019">
    <property type="entry name" value="MscL_channel"/>
</dbReference>
<dbReference type="NCBIfam" id="TIGR00220">
    <property type="entry name" value="mscL"/>
    <property type="match status" value="1"/>
</dbReference>
<dbReference type="NCBIfam" id="NF001843">
    <property type="entry name" value="PRK00567.1-4"/>
    <property type="match status" value="1"/>
</dbReference>
<dbReference type="NCBIfam" id="NF010557">
    <property type="entry name" value="PRK13952.1"/>
    <property type="match status" value="1"/>
</dbReference>
<dbReference type="PANTHER" id="PTHR30266:SF2">
    <property type="entry name" value="LARGE-CONDUCTANCE MECHANOSENSITIVE CHANNEL"/>
    <property type="match status" value="1"/>
</dbReference>
<dbReference type="PANTHER" id="PTHR30266">
    <property type="entry name" value="MECHANOSENSITIVE CHANNEL MSCL"/>
    <property type="match status" value="1"/>
</dbReference>
<dbReference type="Pfam" id="PF01741">
    <property type="entry name" value="MscL"/>
    <property type="match status" value="1"/>
</dbReference>
<dbReference type="PRINTS" id="PR01264">
    <property type="entry name" value="MECHCHANNEL"/>
</dbReference>
<dbReference type="SUPFAM" id="SSF81330">
    <property type="entry name" value="Gated mechanosensitive channel"/>
    <property type="match status" value="1"/>
</dbReference>
<dbReference type="PROSITE" id="PS01327">
    <property type="entry name" value="MSCL"/>
    <property type="match status" value="1"/>
</dbReference>
<sequence length="143" mass="15259">MSILSEFKEFAVKGNVIDLAVGVIIGAAFGKIVDSIVADIIMPVVGLVFGKLDFSNLYVVLGTVPAGVANNLADLKKAGVPVLAYGNFITIAVNFVILAFIIFMMVKQINKLRKTHAEAPAAPVAPPEDIALLREIRDSLKRP</sequence>